<proteinExistence type="inferred from homology"/>
<dbReference type="EMBL" id="CP000705">
    <property type="protein sequence ID" value="ABQ83719.1"/>
    <property type="molecule type" value="Genomic_DNA"/>
</dbReference>
<dbReference type="RefSeq" id="WP_003664550.1">
    <property type="nucleotide sequence ID" value="NZ_AZDD01000010.1"/>
</dbReference>
<dbReference type="SMR" id="A5VLJ5"/>
<dbReference type="STRING" id="557436.Lreu_1473"/>
<dbReference type="GeneID" id="77191469"/>
<dbReference type="KEGG" id="lre:Lreu_1473"/>
<dbReference type="PATRIC" id="fig|557436.17.peg.150"/>
<dbReference type="eggNOG" id="COG0093">
    <property type="taxonomic scope" value="Bacteria"/>
</dbReference>
<dbReference type="HOGENOM" id="CLU_095071_2_1_9"/>
<dbReference type="Proteomes" id="UP000001991">
    <property type="component" value="Chromosome"/>
</dbReference>
<dbReference type="GO" id="GO:0022625">
    <property type="term" value="C:cytosolic large ribosomal subunit"/>
    <property type="evidence" value="ECO:0007669"/>
    <property type="project" value="TreeGrafter"/>
</dbReference>
<dbReference type="GO" id="GO:0070180">
    <property type="term" value="F:large ribosomal subunit rRNA binding"/>
    <property type="evidence" value="ECO:0007669"/>
    <property type="project" value="TreeGrafter"/>
</dbReference>
<dbReference type="GO" id="GO:0003735">
    <property type="term" value="F:structural constituent of ribosome"/>
    <property type="evidence" value="ECO:0007669"/>
    <property type="project" value="InterPro"/>
</dbReference>
<dbReference type="GO" id="GO:0006412">
    <property type="term" value="P:translation"/>
    <property type="evidence" value="ECO:0007669"/>
    <property type="project" value="UniProtKB-UniRule"/>
</dbReference>
<dbReference type="CDD" id="cd00337">
    <property type="entry name" value="Ribosomal_uL14"/>
    <property type="match status" value="1"/>
</dbReference>
<dbReference type="FunFam" id="2.40.150.20:FF:000001">
    <property type="entry name" value="50S ribosomal protein L14"/>
    <property type="match status" value="1"/>
</dbReference>
<dbReference type="Gene3D" id="2.40.150.20">
    <property type="entry name" value="Ribosomal protein L14"/>
    <property type="match status" value="1"/>
</dbReference>
<dbReference type="HAMAP" id="MF_01367">
    <property type="entry name" value="Ribosomal_uL14"/>
    <property type="match status" value="1"/>
</dbReference>
<dbReference type="InterPro" id="IPR000218">
    <property type="entry name" value="Ribosomal_uL14"/>
</dbReference>
<dbReference type="InterPro" id="IPR005745">
    <property type="entry name" value="Ribosomal_uL14_bac-type"/>
</dbReference>
<dbReference type="InterPro" id="IPR019972">
    <property type="entry name" value="Ribosomal_uL14_CS"/>
</dbReference>
<dbReference type="InterPro" id="IPR036853">
    <property type="entry name" value="Ribosomal_uL14_sf"/>
</dbReference>
<dbReference type="NCBIfam" id="TIGR01067">
    <property type="entry name" value="rplN_bact"/>
    <property type="match status" value="1"/>
</dbReference>
<dbReference type="PANTHER" id="PTHR11761">
    <property type="entry name" value="50S/60S RIBOSOMAL PROTEIN L14/L23"/>
    <property type="match status" value="1"/>
</dbReference>
<dbReference type="PANTHER" id="PTHR11761:SF3">
    <property type="entry name" value="LARGE RIBOSOMAL SUBUNIT PROTEIN UL14M"/>
    <property type="match status" value="1"/>
</dbReference>
<dbReference type="Pfam" id="PF00238">
    <property type="entry name" value="Ribosomal_L14"/>
    <property type="match status" value="1"/>
</dbReference>
<dbReference type="SMART" id="SM01374">
    <property type="entry name" value="Ribosomal_L14"/>
    <property type="match status" value="1"/>
</dbReference>
<dbReference type="SUPFAM" id="SSF50193">
    <property type="entry name" value="Ribosomal protein L14"/>
    <property type="match status" value="1"/>
</dbReference>
<dbReference type="PROSITE" id="PS00049">
    <property type="entry name" value="RIBOSOMAL_L14"/>
    <property type="match status" value="1"/>
</dbReference>
<reference key="1">
    <citation type="journal article" date="2011" name="PLoS Genet.">
        <title>The evolution of host specialization in the vertebrate gut symbiont Lactobacillus reuteri.</title>
        <authorList>
            <person name="Frese S.A."/>
            <person name="Benson A.K."/>
            <person name="Tannock G.W."/>
            <person name="Loach D.M."/>
            <person name="Kim J."/>
            <person name="Zhang M."/>
            <person name="Oh P.L."/>
            <person name="Heng N.C."/>
            <person name="Patil P.B."/>
            <person name="Juge N."/>
            <person name="Mackenzie D.A."/>
            <person name="Pearson B.M."/>
            <person name="Lapidus A."/>
            <person name="Dalin E."/>
            <person name="Tice H."/>
            <person name="Goltsman E."/>
            <person name="Land M."/>
            <person name="Hauser L."/>
            <person name="Ivanova N."/>
            <person name="Kyrpides N.C."/>
            <person name="Walter J."/>
        </authorList>
    </citation>
    <scope>NUCLEOTIDE SEQUENCE [LARGE SCALE GENOMIC DNA]</scope>
    <source>
        <strain>DSM 20016</strain>
    </source>
</reference>
<name>RL14_LIMRD</name>
<organism>
    <name type="scientific">Limosilactobacillus reuteri (strain DSM 20016)</name>
    <name type="common">Lactobacillus reuteri</name>
    <dbReference type="NCBI Taxonomy" id="557436"/>
    <lineage>
        <taxon>Bacteria</taxon>
        <taxon>Bacillati</taxon>
        <taxon>Bacillota</taxon>
        <taxon>Bacilli</taxon>
        <taxon>Lactobacillales</taxon>
        <taxon>Lactobacillaceae</taxon>
        <taxon>Limosilactobacillus</taxon>
    </lineage>
</organism>
<comment type="function">
    <text evidence="1">Binds to 23S rRNA. Forms part of two intersubunit bridges in the 70S ribosome.</text>
</comment>
<comment type="subunit">
    <text evidence="1">Part of the 50S ribosomal subunit. Forms a cluster with proteins L3 and L19. In the 70S ribosome, L14 and L19 interact and together make contacts with the 16S rRNA in bridges B5 and B8.</text>
</comment>
<comment type="similarity">
    <text evidence="1">Belongs to the universal ribosomal protein uL14 family.</text>
</comment>
<gene>
    <name evidence="1" type="primary">rplN</name>
    <name type="ordered locus">Lreu_1473</name>
</gene>
<keyword id="KW-1185">Reference proteome</keyword>
<keyword id="KW-0687">Ribonucleoprotein</keyword>
<keyword id="KW-0689">Ribosomal protein</keyword>
<keyword id="KW-0694">RNA-binding</keyword>
<keyword id="KW-0699">rRNA-binding</keyword>
<protein>
    <recommendedName>
        <fullName evidence="1">Large ribosomal subunit protein uL14</fullName>
    </recommendedName>
    <alternativeName>
        <fullName evidence="2">50S ribosomal protein L14</fullName>
    </alternativeName>
</protein>
<sequence length="122" mass="13144">MIQQESRLKVADNSGAREILVIKILGGSRVKTGNIGDIIVATVKQATPGGVVKKGDVVKAVVVRTKHGIHRKDGSYIKFDENAAVLINNDKSPKGTRIFGPIARELRGDDFMKIVSLAPEVL</sequence>
<accession>A5VLJ5</accession>
<evidence type="ECO:0000255" key="1">
    <source>
        <dbReference type="HAMAP-Rule" id="MF_01367"/>
    </source>
</evidence>
<evidence type="ECO:0000305" key="2"/>
<feature type="chain" id="PRO_1000068008" description="Large ribosomal subunit protein uL14">
    <location>
        <begin position="1"/>
        <end position="122"/>
    </location>
</feature>